<sequence>MLTDQEKIDLVNALDFVVIEPHTQSIYVHNDEKTNGVLAKVLHTISVDEYIESFKKGSLIDIFPAAMQEAGAEGFKDGQFVIMPKKFYVDQCYAMSKEIERLTNLNNLHNIKPNTYQGLIH</sequence>
<name>YORW_BACSU</name>
<feature type="chain" id="PRO_0000372597" description="SPbeta prophage-derived uncharacterized protein YorW">
    <location>
        <begin position="1"/>
        <end position="121"/>
    </location>
</feature>
<reference key="1">
    <citation type="journal article" date="1997" name="Nature">
        <title>The complete genome sequence of the Gram-positive bacterium Bacillus subtilis.</title>
        <authorList>
            <person name="Kunst F."/>
            <person name="Ogasawara N."/>
            <person name="Moszer I."/>
            <person name="Albertini A.M."/>
            <person name="Alloni G."/>
            <person name="Azevedo V."/>
            <person name="Bertero M.G."/>
            <person name="Bessieres P."/>
            <person name="Bolotin A."/>
            <person name="Borchert S."/>
            <person name="Borriss R."/>
            <person name="Boursier L."/>
            <person name="Brans A."/>
            <person name="Braun M."/>
            <person name="Brignell S.C."/>
            <person name="Bron S."/>
            <person name="Brouillet S."/>
            <person name="Bruschi C.V."/>
            <person name="Caldwell B."/>
            <person name="Capuano V."/>
            <person name="Carter N.M."/>
            <person name="Choi S.-K."/>
            <person name="Codani J.-J."/>
            <person name="Connerton I.F."/>
            <person name="Cummings N.J."/>
            <person name="Daniel R.A."/>
            <person name="Denizot F."/>
            <person name="Devine K.M."/>
            <person name="Duesterhoeft A."/>
            <person name="Ehrlich S.D."/>
            <person name="Emmerson P.T."/>
            <person name="Entian K.-D."/>
            <person name="Errington J."/>
            <person name="Fabret C."/>
            <person name="Ferrari E."/>
            <person name="Foulger D."/>
            <person name="Fritz C."/>
            <person name="Fujita M."/>
            <person name="Fujita Y."/>
            <person name="Fuma S."/>
            <person name="Galizzi A."/>
            <person name="Galleron N."/>
            <person name="Ghim S.-Y."/>
            <person name="Glaser P."/>
            <person name="Goffeau A."/>
            <person name="Golightly E.J."/>
            <person name="Grandi G."/>
            <person name="Guiseppi G."/>
            <person name="Guy B.J."/>
            <person name="Haga K."/>
            <person name="Haiech J."/>
            <person name="Harwood C.R."/>
            <person name="Henaut A."/>
            <person name="Hilbert H."/>
            <person name="Holsappel S."/>
            <person name="Hosono S."/>
            <person name="Hullo M.-F."/>
            <person name="Itaya M."/>
            <person name="Jones L.-M."/>
            <person name="Joris B."/>
            <person name="Karamata D."/>
            <person name="Kasahara Y."/>
            <person name="Klaerr-Blanchard M."/>
            <person name="Klein C."/>
            <person name="Kobayashi Y."/>
            <person name="Koetter P."/>
            <person name="Koningstein G."/>
            <person name="Krogh S."/>
            <person name="Kumano M."/>
            <person name="Kurita K."/>
            <person name="Lapidus A."/>
            <person name="Lardinois S."/>
            <person name="Lauber J."/>
            <person name="Lazarevic V."/>
            <person name="Lee S.-M."/>
            <person name="Levine A."/>
            <person name="Liu H."/>
            <person name="Masuda S."/>
            <person name="Mauel C."/>
            <person name="Medigue C."/>
            <person name="Medina N."/>
            <person name="Mellado R.P."/>
            <person name="Mizuno M."/>
            <person name="Moestl D."/>
            <person name="Nakai S."/>
            <person name="Noback M."/>
            <person name="Noone D."/>
            <person name="O'Reilly M."/>
            <person name="Ogawa K."/>
            <person name="Ogiwara A."/>
            <person name="Oudega B."/>
            <person name="Park S.-H."/>
            <person name="Parro V."/>
            <person name="Pohl T.M."/>
            <person name="Portetelle D."/>
            <person name="Porwollik S."/>
            <person name="Prescott A.M."/>
            <person name="Presecan E."/>
            <person name="Pujic P."/>
            <person name="Purnelle B."/>
            <person name="Rapoport G."/>
            <person name="Rey M."/>
            <person name="Reynolds S."/>
            <person name="Rieger M."/>
            <person name="Rivolta C."/>
            <person name="Rocha E."/>
            <person name="Roche B."/>
            <person name="Rose M."/>
            <person name="Sadaie Y."/>
            <person name="Sato T."/>
            <person name="Scanlan E."/>
            <person name="Schleich S."/>
            <person name="Schroeter R."/>
            <person name="Scoffone F."/>
            <person name="Sekiguchi J."/>
            <person name="Sekowska A."/>
            <person name="Seror S.J."/>
            <person name="Serror P."/>
            <person name="Shin B.-S."/>
            <person name="Soldo B."/>
            <person name="Sorokin A."/>
            <person name="Tacconi E."/>
            <person name="Takagi T."/>
            <person name="Takahashi H."/>
            <person name="Takemaru K."/>
            <person name="Takeuchi M."/>
            <person name="Tamakoshi A."/>
            <person name="Tanaka T."/>
            <person name="Terpstra P."/>
            <person name="Tognoni A."/>
            <person name="Tosato V."/>
            <person name="Uchiyama S."/>
            <person name="Vandenbol M."/>
            <person name="Vannier F."/>
            <person name="Vassarotti A."/>
            <person name="Viari A."/>
            <person name="Wambutt R."/>
            <person name="Wedler E."/>
            <person name="Wedler H."/>
            <person name="Weitzenegger T."/>
            <person name="Winters P."/>
            <person name="Wipat A."/>
            <person name="Yamamoto H."/>
            <person name="Yamane K."/>
            <person name="Yasumoto K."/>
            <person name="Yata K."/>
            <person name="Yoshida K."/>
            <person name="Yoshikawa H.-F."/>
            <person name="Zumstein E."/>
            <person name="Yoshikawa H."/>
            <person name="Danchin A."/>
        </authorList>
    </citation>
    <scope>NUCLEOTIDE SEQUENCE [LARGE SCALE GENOMIC DNA]</scope>
    <source>
        <strain>168</strain>
    </source>
</reference>
<organism>
    <name type="scientific">Bacillus subtilis (strain 168)</name>
    <dbReference type="NCBI Taxonomy" id="224308"/>
    <lineage>
        <taxon>Bacteria</taxon>
        <taxon>Bacillati</taxon>
        <taxon>Bacillota</taxon>
        <taxon>Bacilli</taxon>
        <taxon>Bacillales</taxon>
        <taxon>Bacillaceae</taxon>
        <taxon>Bacillus</taxon>
    </lineage>
</organism>
<protein>
    <recommendedName>
        <fullName>SPbeta prophage-derived uncharacterized protein YorW</fullName>
    </recommendedName>
</protein>
<dbReference type="EMBL" id="AL009126">
    <property type="protein sequence ID" value="CAB13915.1"/>
    <property type="molecule type" value="Genomic_DNA"/>
</dbReference>
<dbReference type="RefSeq" id="NP_389905.1">
    <property type="nucleotide sequence ID" value="NC_000964.3"/>
</dbReference>
<dbReference type="RefSeq" id="WP_004399530.1">
    <property type="nucleotide sequence ID" value="NZ_OZ025638.1"/>
</dbReference>
<dbReference type="SMR" id="O31892"/>
<dbReference type="FunCoup" id="O31892">
    <property type="interactions" value="70"/>
</dbReference>
<dbReference type="STRING" id="224308.BSU20230"/>
<dbReference type="PaxDb" id="224308-BSU20230"/>
<dbReference type="EnsemblBacteria" id="CAB13915">
    <property type="protein sequence ID" value="CAB13915"/>
    <property type="gene ID" value="BSU_20230"/>
</dbReference>
<dbReference type="GeneID" id="939522"/>
<dbReference type="KEGG" id="bsu:BSU20230"/>
<dbReference type="PATRIC" id="fig|224308.179.peg.2213"/>
<dbReference type="InParanoid" id="O31892"/>
<dbReference type="OrthoDB" id="2893245at2"/>
<dbReference type="BioCyc" id="BSUB:BSU20230-MONOMER"/>
<dbReference type="Proteomes" id="UP000001570">
    <property type="component" value="Chromosome"/>
</dbReference>
<gene>
    <name type="primary">yorW</name>
    <name type="ordered locus">BSU20230</name>
</gene>
<proteinExistence type="predicted"/>
<accession>O31892</accession>
<keyword id="KW-1185">Reference proteome</keyword>